<organism>
    <name type="scientific">Homo sapiens</name>
    <name type="common">Human</name>
    <dbReference type="NCBI Taxonomy" id="9606"/>
    <lineage>
        <taxon>Eukaryota</taxon>
        <taxon>Metazoa</taxon>
        <taxon>Chordata</taxon>
        <taxon>Craniata</taxon>
        <taxon>Vertebrata</taxon>
        <taxon>Euteleostomi</taxon>
        <taxon>Mammalia</taxon>
        <taxon>Eutheria</taxon>
        <taxon>Euarchontoglires</taxon>
        <taxon>Primates</taxon>
        <taxon>Haplorrhini</taxon>
        <taxon>Catarrhini</taxon>
        <taxon>Hominidae</taxon>
        <taxon>Homo</taxon>
    </lineage>
</organism>
<sequence>MSLLDCFCTSRTQVESLRPEKQSETSIHQYLVDEPTLSWSRPSTRASEVLCSTNVSHYELQVEIGRGFDNLTSVHLARHTPTGTLVTIKITNLENCNEERLKALQKAVILSHFFRHPNITTYWTVFTVGSWLWVISPFMAYGSASQLLRTYFPEGMSETLIRNILFGAVRGLNYLHQNGCIHRSIKASHILISGDGLVTLSGLSHLHSLVKHGQRHRAVYDFPQFSTSVQPWLSPELLRQDLHGYNVKSDIYSVGITACELASGQVPFQDMHRTQMLLQKLKGPPYSPLDISIFPQSESRMKNSQSGVDSGIGESVLVSSGTHTVNSDRLHTPSSKTFSPAFFSLVQLCLQQDPEKRPSASSLLSHVFFKQMKEESQDSILSLLPPAYNKPSISLPPVLPWTEPECDFPDEKDSYWEF</sequence>
<reference key="1">
    <citation type="journal article" date="2001" name="Genomics">
        <title>Cloning and characterization of three novel genes, ALS2CR1, ALS2CR2, and ALS2CR3, in the juvenile amyotrophic lateral sclerosis (ALS2) critical region at chromosome 2q33-q34: candidate genes for ALS2.</title>
        <authorList>
            <person name="Hadano S."/>
            <person name="Yanagisawa Y."/>
            <person name="Skaug J."/>
            <person name="Fichter K."/>
            <person name="Nasir J."/>
            <person name="Martindale D."/>
            <person name="Koop B.F."/>
            <person name="Scherer S.W."/>
            <person name="Nicholson D.W."/>
            <person name="Rouleau G.A."/>
            <person name="Ikeda J.-E."/>
            <person name="Hayden M.R."/>
        </authorList>
    </citation>
    <scope>NUCLEOTIDE SEQUENCE [MRNA] (ISOFORM 1)</scope>
    <scope>TISSUE SPECIFICITY</scope>
</reference>
<reference key="2">
    <citation type="journal article" date="2002" name="J. Biol. Chem.">
        <title>ILPIP, a novel anti-apoptotic protein that enhances XIAP-mediated activation of JNK1 and protection against apoptosis.</title>
        <authorList>
            <person name="Sanna M.G."/>
            <person name="Da Silva Correia J."/>
            <person name="Luo Y."/>
            <person name="Chuang B."/>
            <person name="Paulson L.M."/>
            <person name="Nguyen B."/>
            <person name="Deveraux Q.L."/>
            <person name="Ulevitch R.J."/>
        </authorList>
    </citation>
    <scope>NUCLEOTIDE SEQUENCE [MRNA] (ISOFORMS 1 AND 3)</scope>
    <scope>TISSUE SPECIFICITY</scope>
    <scope>INTERACTION WITH BIRC4</scope>
</reference>
<reference key="3">
    <citation type="submission" date="1998-12" db="EMBL/GenBank/DDBJ databases">
        <title>Functional prediction of the coding sequences of 121 new genes deduced by analysis of cDNA clones from human fetal liver.</title>
        <authorList>
            <person name="Zhang C."/>
            <person name="Yu Y."/>
            <person name="Zhang S."/>
            <person name="Wei H."/>
            <person name="Zhou G."/>
            <person name="Ouyang S."/>
            <person name="Luo L."/>
            <person name="Bi J."/>
            <person name="Liu M."/>
            <person name="He F."/>
        </authorList>
    </citation>
    <scope>NUCLEOTIDE SEQUENCE [LARGE SCALE MRNA] (ISOFORM 3)</scope>
    <source>
        <tissue>Fetal liver</tissue>
    </source>
</reference>
<reference key="4">
    <citation type="journal article" date="2004" name="Nat. Genet.">
        <title>Complete sequencing and characterization of 21,243 full-length human cDNAs.</title>
        <authorList>
            <person name="Ota T."/>
            <person name="Suzuki Y."/>
            <person name="Nishikawa T."/>
            <person name="Otsuki T."/>
            <person name="Sugiyama T."/>
            <person name="Irie R."/>
            <person name="Wakamatsu A."/>
            <person name="Hayashi K."/>
            <person name="Sato H."/>
            <person name="Nagai K."/>
            <person name="Kimura K."/>
            <person name="Makita H."/>
            <person name="Sekine M."/>
            <person name="Obayashi M."/>
            <person name="Nishi T."/>
            <person name="Shibahara T."/>
            <person name="Tanaka T."/>
            <person name="Ishii S."/>
            <person name="Yamamoto J."/>
            <person name="Saito K."/>
            <person name="Kawai Y."/>
            <person name="Isono Y."/>
            <person name="Nakamura Y."/>
            <person name="Nagahari K."/>
            <person name="Murakami K."/>
            <person name="Yasuda T."/>
            <person name="Iwayanagi T."/>
            <person name="Wagatsuma M."/>
            <person name="Shiratori A."/>
            <person name="Sudo H."/>
            <person name="Hosoiri T."/>
            <person name="Kaku Y."/>
            <person name="Kodaira H."/>
            <person name="Kondo H."/>
            <person name="Sugawara M."/>
            <person name="Takahashi M."/>
            <person name="Kanda K."/>
            <person name="Yokoi T."/>
            <person name="Furuya T."/>
            <person name="Kikkawa E."/>
            <person name="Omura Y."/>
            <person name="Abe K."/>
            <person name="Kamihara K."/>
            <person name="Katsuta N."/>
            <person name="Sato K."/>
            <person name="Tanikawa M."/>
            <person name="Yamazaki M."/>
            <person name="Ninomiya K."/>
            <person name="Ishibashi T."/>
            <person name="Yamashita H."/>
            <person name="Murakawa K."/>
            <person name="Fujimori K."/>
            <person name="Tanai H."/>
            <person name="Kimata M."/>
            <person name="Watanabe M."/>
            <person name="Hiraoka S."/>
            <person name="Chiba Y."/>
            <person name="Ishida S."/>
            <person name="Ono Y."/>
            <person name="Takiguchi S."/>
            <person name="Watanabe S."/>
            <person name="Yosida M."/>
            <person name="Hotuta T."/>
            <person name="Kusano J."/>
            <person name="Kanehori K."/>
            <person name="Takahashi-Fujii A."/>
            <person name="Hara H."/>
            <person name="Tanase T.-O."/>
            <person name="Nomura Y."/>
            <person name="Togiya S."/>
            <person name="Komai F."/>
            <person name="Hara R."/>
            <person name="Takeuchi K."/>
            <person name="Arita M."/>
            <person name="Imose N."/>
            <person name="Musashino K."/>
            <person name="Yuuki H."/>
            <person name="Oshima A."/>
            <person name="Sasaki N."/>
            <person name="Aotsuka S."/>
            <person name="Yoshikawa Y."/>
            <person name="Matsunawa H."/>
            <person name="Ichihara T."/>
            <person name="Shiohata N."/>
            <person name="Sano S."/>
            <person name="Moriya S."/>
            <person name="Momiyama H."/>
            <person name="Satoh N."/>
            <person name="Takami S."/>
            <person name="Terashima Y."/>
            <person name="Suzuki O."/>
            <person name="Nakagawa S."/>
            <person name="Senoh A."/>
            <person name="Mizoguchi H."/>
            <person name="Goto Y."/>
            <person name="Shimizu F."/>
            <person name="Wakebe H."/>
            <person name="Hishigaki H."/>
            <person name="Watanabe T."/>
            <person name="Sugiyama A."/>
            <person name="Takemoto M."/>
            <person name="Kawakami B."/>
            <person name="Yamazaki M."/>
            <person name="Watanabe K."/>
            <person name="Kumagai A."/>
            <person name="Itakura S."/>
            <person name="Fukuzumi Y."/>
            <person name="Fujimori Y."/>
            <person name="Komiyama M."/>
            <person name="Tashiro H."/>
            <person name="Tanigami A."/>
            <person name="Fujiwara T."/>
            <person name="Ono T."/>
            <person name="Yamada K."/>
            <person name="Fujii Y."/>
            <person name="Ozaki K."/>
            <person name="Hirao M."/>
            <person name="Ohmori Y."/>
            <person name="Kawabata A."/>
            <person name="Hikiji T."/>
            <person name="Kobatake N."/>
            <person name="Inagaki H."/>
            <person name="Ikema Y."/>
            <person name="Okamoto S."/>
            <person name="Okitani R."/>
            <person name="Kawakami T."/>
            <person name="Noguchi S."/>
            <person name="Itoh T."/>
            <person name="Shigeta K."/>
            <person name="Senba T."/>
            <person name="Matsumura K."/>
            <person name="Nakajima Y."/>
            <person name="Mizuno T."/>
            <person name="Morinaga M."/>
            <person name="Sasaki M."/>
            <person name="Togashi T."/>
            <person name="Oyama M."/>
            <person name="Hata H."/>
            <person name="Watanabe M."/>
            <person name="Komatsu T."/>
            <person name="Mizushima-Sugano J."/>
            <person name="Satoh T."/>
            <person name="Shirai Y."/>
            <person name="Takahashi Y."/>
            <person name="Nakagawa K."/>
            <person name="Okumura K."/>
            <person name="Nagase T."/>
            <person name="Nomura N."/>
            <person name="Kikuchi H."/>
            <person name="Masuho Y."/>
            <person name="Yamashita R."/>
            <person name="Nakai K."/>
            <person name="Yada T."/>
            <person name="Nakamura Y."/>
            <person name="Ohara O."/>
            <person name="Isogai T."/>
            <person name="Sugano S."/>
        </authorList>
    </citation>
    <scope>NUCLEOTIDE SEQUENCE [LARGE SCALE MRNA] (ISOFORM 1)</scope>
</reference>
<reference key="5">
    <citation type="journal article" date="2005" name="Nature">
        <title>Generation and annotation of the DNA sequences of human chromosomes 2 and 4.</title>
        <authorList>
            <person name="Hillier L.W."/>
            <person name="Graves T.A."/>
            <person name="Fulton R.S."/>
            <person name="Fulton L.A."/>
            <person name="Pepin K.H."/>
            <person name="Minx P."/>
            <person name="Wagner-McPherson C."/>
            <person name="Layman D."/>
            <person name="Wylie K."/>
            <person name="Sekhon M."/>
            <person name="Becker M.C."/>
            <person name="Fewell G.A."/>
            <person name="Delehaunty K.D."/>
            <person name="Miner T.L."/>
            <person name="Nash W.E."/>
            <person name="Kremitzki C."/>
            <person name="Oddy L."/>
            <person name="Du H."/>
            <person name="Sun H."/>
            <person name="Bradshaw-Cordum H."/>
            <person name="Ali J."/>
            <person name="Carter J."/>
            <person name="Cordes M."/>
            <person name="Harris A."/>
            <person name="Isak A."/>
            <person name="van Brunt A."/>
            <person name="Nguyen C."/>
            <person name="Du F."/>
            <person name="Courtney L."/>
            <person name="Kalicki J."/>
            <person name="Ozersky P."/>
            <person name="Abbott S."/>
            <person name="Armstrong J."/>
            <person name="Belter E.A."/>
            <person name="Caruso L."/>
            <person name="Cedroni M."/>
            <person name="Cotton M."/>
            <person name="Davidson T."/>
            <person name="Desai A."/>
            <person name="Elliott G."/>
            <person name="Erb T."/>
            <person name="Fronick C."/>
            <person name="Gaige T."/>
            <person name="Haakenson W."/>
            <person name="Haglund K."/>
            <person name="Holmes A."/>
            <person name="Harkins R."/>
            <person name="Kim K."/>
            <person name="Kruchowski S.S."/>
            <person name="Strong C.M."/>
            <person name="Grewal N."/>
            <person name="Goyea E."/>
            <person name="Hou S."/>
            <person name="Levy A."/>
            <person name="Martinka S."/>
            <person name="Mead K."/>
            <person name="McLellan M.D."/>
            <person name="Meyer R."/>
            <person name="Randall-Maher J."/>
            <person name="Tomlinson C."/>
            <person name="Dauphin-Kohlberg S."/>
            <person name="Kozlowicz-Reilly A."/>
            <person name="Shah N."/>
            <person name="Swearengen-Shahid S."/>
            <person name="Snider J."/>
            <person name="Strong J.T."/>
            <person name="Thompson J."/>
            <person name="Yoakum M."/>
            <person name="Leonard S."/>
            <person name="Pearman C."/>
            <person name="Trani L."/>
            <person name="Radionenko M."/>
            <person name="Waligorski J.E."/>
            <person name="Wang C."/>
            <person name="Rock S.M."/>
            <person name="Tin-Wollam A.-M."/>
            <person name="Maupin R."/>
            <person name="Latreille P."/>
            <person name="Wendl M.C."/>
            <person name="Yang S.-P."/>
            <person name="Pohl C."/>
            <person name="Wallis J.W."/>
            <person name="Spieth J."/>
            <person name="Bieri T.A."/>
            <person name="Berkowicz N."/>
            <person name="Nelson J.O."/>
            <person name="Osborne J."/>
            <person name="Ding L."/>
            <person name="Meyer R."/>
            <person name="Sabo A."/>
            <person name="Shotland Y."/>
            <person name="Sinha P."/>
            <person name="Wohldmann P.E."/>
            <person name="Cook L.L."/>
            <person name="Hickenbotham M.T."/>
            <person name="Eldred J."/>
            <person name="Williams D."/>
            <person name="Jones T.A."/>
            <person name="She X."/>
            <person name="Ciccarelli F.D."/>
            <person name="Izaurralde E."/>
            <person name="Taylor J."/>
            <person name="Schmutz J."/>
            <person name="Myers R.M."/>
            <person name="Cox D.R."/>
            <person name="Huang X."/>
            <person name="McPherson J.D."/>
            <person name="Mardis E.R."/>
            <person name="Clifton S.W."/>
            <person name="Warren W.C."/>
            <person name="Chinwalla A.T."/>
            <person name="Eddy S.R."/>
            <person name="Marra M.A."/>
            <person name="Ovcharenko I."/>
            <person name="Furey T.S."/>
            <person name="Miller W."/>
            <person name="Eichler E.E."/>
            <person name="Bork P."/>
            <person name="Suyama M."/>
            <person name="Torrents D."/>
            <person name="Waterston R.H."/>
            <person name="Wilson R.K."/>
        </authorList>
    </citation>
    <scope>NUCLEOTIDE SEQUENCE [LARGE SCALE GENOMIC DNA]</scope>
</reference>
<reference key="6">
    <citation type="journal article" date="2004" name="Genome Res.">
        <title>The status, quality, and expansion of the NIH full-length cDNA project: the Mammalian Gene Collection (MGC).</title>
        <authorList>
            <consortium name="The MGC Project Team"/>
        </authorList>
    </citation>
    <scope>NUCLEOTIDE SEQUENCE [LARGE SCALE MRNA] (ISOFORMS 1 AND 2)</scope>
    <source>
        <tissue>Placenta</tissue>
    </source>
</reference>
<reference key="7">
    <citation type="journal article" date="2003" name="EMBO J.">
        <title>MO25alpha/beta interact with STRADalpha/beta enhancing their ability to bind, activate and localize LKB1 in the cytoplasm.</title>
        <authorList>
            <person name="Boudeau J."/>
            <person name="Baas A.F."/>
            <person name="Deak M."/>
            <person name="Morrice N.A."/>
            <person name="Kieloch A."/>
            <person name="Schutkowski M."/>
            <person name="Prescott A.R."/>
            <person name="Clevers H.C."/>
            <person name="Alessi D.R."/>
        </authorList>
    </citation>
    <scope>FUNCTION</scope>
    <scope>SUBCELLULAR LOCATION</scope>
    <scope>INTERACTION WITH STK11/LKB1 AND CAB39</scope>
</reference>
<reference key="8">
    <citation type="journal article" date="2007" name="Nature">
        <title>Patterns of somatic mutation in human cancer genomes.</title>
        <authorList>
            <person name="Greenman C."/>
            <person name="Stephens P."/>
            <person name="Smith R."/>
            <person name="Dalgliesh G.L."/>
            <person name="Hunter C."/>
            <person name="Bignell G."/>
            <person name="Davies H."/>
            <person name="Teague J."/>
            <person name="Butler A."/>
            <person name="Stevens C."/>
            <person name="Edkins S."/>
            <person name="O'Meara S."/>
            <person name="Vastrik I."/>
            <person name="Schmidt E.E."/>
            <person name="Avis T."/>
            <person name="Barthorpe S."/>
            <person name="Bhamra G."/>
            <person name="Buck G."/>
            <person name="Choudhury B."/>
            <person name="Clements J."/>
            <person name="Cole J."/>
            <person name="Dicks E."/>
            <person name="Forbes S."/>
            <person name="Gray K."/>
            <person name="Halliday K."/>
            <person name="Harrison R."/>
            <person name="Hills K."/>
            <person name="Hinton J."/>
            <person name="Jenkinson A."/>
            <person name="Jones D."/>
            <person name="Menzies A."/>
            <person name="Mironenko T."/>
            <person name="Perry J."/>
            <person name="Raine K."/>
            <person name="Richardson D."/>
            <person name="Shepherd R."/>
            <person name="Small A."/>
            <person name="Tofts C."/>
            <person name="Varian J."/>
            <person name="Webb T."/>
            <person name="West S."/>
            <person name="Widaa S."/>
            <person name="Yates A."/>
            <person name="Cahill D.P."/>
            <person name="Louis D.N."/>
            <person name="Goldstraw P."/>
            <person name="Nicholson A.G."/>
            <person name="Brasseur F."/>
            <person name="Looijenga L."/>
            <person name="Weber B.L."/>
            <person name="Chiew Y.-E."/>
            <person name="DeFazio A."/>
            <person name="Greaves M.F."/>
            <person name="Green A.R."/>
            <person name="Campbell P."/>
            <person name="Birney E."/>
            <person name="Easton D.F."/>
            <person name="Chenevix-Trench G."/>
            <person name="Tan M.-H."/>
            <person name="Khoo S.K."/>
            <person name="Teh B.T."/>
            <person name="Yuen S.T."/>
            <person name="Leung S.Y."/>
            <person name="Wooster R."/>
            <person name="Futreal P.A."/>
            <person name="Stratton M.R."/>
        </authorList>
    </citation>
    <scope>VARIANTS [LARGE SCALE ANALYSIS] GLU-155 AND LEU-386</scope>
</reference>
<dbReference type="EMBL" id="AB038950">
    <property type="protein sequence ID" value="BAB32500.1"/>
    <property type="molecule type" value="mRNA"/>
</dbReference>
<dbReference type="EMBL" id="AY093697">
    <property type="protein sequence ID" value="AAM19143.1"/>
    <property type="molecule type" value="mRNA"/>
</dbReference>
<dbReference type="EMBL" id="AF116618">
    <property type="protein sequence ID" value="AAF71042.1"/>
    <property type="molecule type" value="mRNA"/>
</dbReference>
<dbReference type="EMBL" id="AK027637">
    <property type="protein sequence ID" value="BAB55254.1"/>
    <property type="molecule type" value="mRNA"/>
</dbReference>
<dbReference type="EMBL" id="AC007282">
    <property type="protein sequence ID" value="AAY14692.1"/>
    <property type="molecule type" value="Genomic_DNA"/>
</dbReference>
<dbReference type="EMBL" id="BC008302">
    <property type="protein sequence ID" value="AAH08302.1"/>
    <property type="molecule type" value="mRNA"/>
</dbReference>
<dbReference type="EMBL" id="BC090871">
    <property type="protein sequence ID" value="AAH90871.1"/>
    <property type="molecule type" value="mRNA"/>
</dbReference>
<dbReference type="CCDS" id="CCDS2348.1">
    <molecule id="Q9C0K7-1"/>
</dbReference>
<dbReference type="CCDS" id="CCDS56161.1">
    <molecule id="Q9C0K7-2"/>
</dbReference>
<dbReference type="RefSeq" id="NP_001193793.1">
    <molecule id="Q9C0K7-2"/>
    <property type="nucleotide sequence ID" value="NM_001206864.2"/>
</dbReference>
<dbReference type="RefSeq" id="NP_061041.2">
    <molecule id="Q9C0K7-1"/>
    <property type="nucleotide sequence ID" value="NM_018571.5"/>
</dbReference>
<dbReference type="RefSeq" id="XP_016859927.1">
    <property type="nucleotide sequence ID" value="XM_017004438.1"/>
</dbReference>
<dbReference type="SMR" id="Q9C0K7"/>
<dbReference type="BioGRID" id="120668">
    <property type="interactions" value="30"/>
</dbReference>
<dbReference type="ComplexPortal" id="CPX-2868">
    <property type="entry name" value="LKB1-STRAD-MO25 serine/threonine protein kinase complex, CAB39-STRADB variant"/>
</dbReference>
<dbReference type="ComplexPortal" id="CPX-2869">
    <property type="entry name" value="LKB1-STRAD-MO25 serine/threonine protein kinase complex, CAB39L-STRADB variant"/>
</dbReference>
<dbReference type="FunCoup" id="Q9C0K7">
    <property type="interactions" value="2312"/>
</dbReference>
<dbReference type="IntAct" id="Q9C0K7">
    <property type="interactions" value="25"/>
</dbReference>
<dbReference type="MINT" id="Q9C0K7"/>
<dbReference type="STRING" id="9606.ENSP00000194530"/>
<dbReference type="ChEMBL" id="CHEMBL4105756"/>
<dbReference type="GlyGen" id="Q9C0K7">
    <property type="glycosylation" value="2 sites, 1 O-linked glycan (2 sites)"/>
</dbReference>
<dbReference type="iPTMnet" id="Q9C0K7"/>
<dbReference type="PhosphoSitePlus" id="Q9C0K7"/>
<dbReference type="BioMuta" id="STRADB"/>
<dbReference type="DMDM" id="74762722"/>
<dbReference type="jPOST" id="Q9C0K7"/>
<dbReference type="MassIVE" id="Q9C0K7"/>
<dbReference type="PaxDb" id="9606-ENSP00000194530"/>
<dbReference type="PeptideAtlas" id="Q9C0K7"/>
<dbReference type="ProteomicsDB" id="80073">
    <molecule id="Q9C0K7-1"/>
</dbReference>
<dbReference type="ProteomicsDB" id="80074">
    <molecule id="Q9C0K7-2"/>
</dbReference>
<dbReference type="ProteomicsDB" id="80075">
    <molecule id="Q9C0K7-3"/>
</dbReference>
<dbReference type="Pumba" id="Q9C0K7"/>
<dbReference type="Antibodypedia" id="19937">
    <property type="antibodies" value="385 antibodies from 38 providers"/>
</dbReference>
<dbReference type="DNASU" id="55437"/>
<dbReference type="Ensembl" id="ENST00000194530.8">
    <molecule id="Q9C0K7-1"/>
    <property type="protein sequence ID" value="ENSP00000194530.3"/>
    <property type="gene ID" value="ENSG00000082146.13"/>
</dbReference>
<dbReference type="Ensembl" id="ENST00000392249.6">
    <molecule id="Q9C0K7-2"/>
    <property type="protein sequence ID" value="ENSP00000376080.2"/>
    <property type="gene ID" value="ENSG00000082146.13"/>
</dbReference>
<dbReference type="GeneID" id="55437"/>
<dbReference type="KEGG" id="hsa:55437"/>
<dbReference type="MANE-Select" id="ENST00000194530.8">
    <property type="protein sequence ID" value="ENSP00000194530.3"/>
    <property type="RefSeq nucleotide sequence ID" value="NM_018571.6"/>
    <property type="RefSeq protein sequence ID" value="NP_061041.2"/>
</dbReference>
<dbReference type="UCSC" id="uc002uyd.5">
    <molecule id="Q9C0K7-1"/>
    <property type="organism name" value="human"/>
</dbReference>
<dbReference type="AGR" id="HGNC:13205"/>
<dbReference type="CTD" id="55437"/>
<dbReference type="DisGeNET" id="55437"/>
<dbReference type="GeneCards" id="STRADB"/>
<dbReference type="HGNC" id="HGNC:13205">
    <property type="gene designation" value="STRADB"/>
</dbReference>
<dbReference type="HPA" id="ENSG00000082146">
    <property type="expression patterns" value="Low tissue specificity"/>
</dbReference>
<dbReference type="MalaCards" id="STRADB"/>
<dbReference type="MIM" id="607333">
    <property type="type" value="gene"/>
</dbReference>
<dbReference type="neXtProt" id="NX_Q9C0K7"/>
<dbReference type="OpenTargets" id="ENSG00000082146"/>
<dbReference type="PharmGKB" id="PA24743"/>
<dbReference type="VEuPathDB" id="HostDB:ENSG00000082146"/>
<dbReference type="eggNOG" id="KOG0582">
    <property type="taxonomic scope" value="Eukaryota"/>
</dbReference>
<dbReference type="GeneTree" id="ENSGT00940000155390"/>
<dbReference type="HOGENOM" id="CLU_000288_63_23_1"/>
<dbReference type="InParanoid" id="Q9C0K7"/>
<dbReference type="OMA" id="KNEMVFC"/>
<dbReference type="OrthoDB" id="840771at2759"/>
<dbReference type="PAN-GO" id="Q9C0K7">
    <property type="GO annotations" value="4 GO annotations based on evolutionary models"/>
</dbReference>
<dbReference type="PhylomeDB" id="Q9C0K7"/>
<dbReference type="TreeFam" id="TF319817"/>
<dbReference type="PathwayCommons" id="Q9C0K7"/>
<dbReference type="Reactome" id="R-HSA-380972">
    <property type="pathway name" value="Energy dependent regulation of mTOR by LKB1-AMPK"/>
</dbReference>
<dbReference type="SignaLink" id="Q9C0K7"/>
<dbReference type="BioGRID-ORCS" id="55437">
    <property type="hits" value="49 hits in 1124 CRISPR screens"/>
</dbReference>
<dbReference type="ChiTaRS" id="STRADB">
    <property type="organism name" value="human"/>
</dbReference>
<dbReference type="GeneWiki" id="ALS2CR2"/>
<dbReference type="GenomeRNAi" id="55437"/>
<dbReference type="Pharos" id="Q9C0K7">
    <property type="development level" value="Tbio"/>
</dbReference>
<dbReference type="PRO" id="PR:Q9C0K7"/>
<dbReference type="Proteomes" id="UP000005640">
    <property type="component" value="Chromosome 2"/>
</dbReference>
<dbReference type="RNAct" id="Q9C0K7">
    <property type="molecule type" value="protein"/>
</dbReference>
<dbReference type="Bgee" id="ENSG00000082146">
    <property type="expression patterns" value="Expressed in adrenal tissue and 97 other cell types or tissues"/>
</dbReference>
<dbReference type="ExpressionAtlas" id="Q9C0K7">
    <property type="expression patterns" value="baseline and differential"/>
</dbReference>
<dbReference type="GO" id="GO:0016235">
    <property type="term" value="C:aggresome"/>
    <property type="evidence" value="ECO:0000314"/>
    <property type="project" value="HPA"/>
</dbReference>
<dbReference type="GO" id="GO:0005737">
    <property type="term" value="C:cytoplasm"/>
    <property type="evidence" value="ECO:0000314"/>
    <property type="project" value="UniProtKB"/>
</dbReference>
<dbReference type="GO" id="GO:0005829">
    <property type="term" value="C:cytosol"/>
    <property type="evidence" value="ECO:0000314"/>
    <property type="project" value="HPA"/>
</dbReference>
<dbReference type="GO" id="GO:0005634">
    <property type="term" value="C:nucleus"/>
    <property type="evidence" value="ECO:0000314"/>
    <property type="project" value="UniProtKB"/>
</dbReference>
<dbReference type="GO" id="GO:1902554">
    <property type="term" value="C:serine/threonine protein kinase complex"/>
    <property type="evidence" value="ECO:0000250"/>
    <property type="project" value="ComplexPortal"/>
</dbReference>
<dbReference type="GO" id="GO:0005524">
    <property type="term" value="F:ATP binding"/>
    <property type="evidence" value="ECO:0007669"/>
    <property type="project" value="UniProtKB-KW"/>
</dbReference>
<dbReference type="GO" id="GO:0043539">
    <property type="term" value="F:protein serine/threonine kinase activator activity"/>
    <property type="evidence" value="ECO:0000318"/>
    <property type="project" value="GO_Central"/>
</dbReference>
<dbReference type="GO" id="GO:0032147">
    <property type="term" value="P:activation of protein kinase activity"/>
    <property type="evidence" value="ECO:0000314"/>
    <property type="project" value="UniProtKB"/>
</dbReference>
<dbReference type="GO" id="GO:0000902">
    <property type="term" value="P:cell morphogenesis"/>
    <property type="evidence" value="ECO:0007669"/>
    <property type="project" value="Ensembl"/>
</dbReference>
<dbReference type="GO" id="GO:0007254">
    <property type="term" value="P:JNK cascade"/>
    <property type="evidence" value="ECO:0007669"/>
    <property type="project" value="Ensembl"/>
</dbReference>
<dbReference type="GO" id="GO:2001240">
    <property type="term" value="P:negative regulation of extrinsic apoptotic signaling pathway in absence of ligand"/>
    <property type="evidence" value="ECO:0007669"/>
    <property type="project" value="Ensembl"/>
</dbReference>
<dbReference type="GO" id="GO:0006611">
    <property type="term" value="P:protein export from nucleus"/>
    <property type="evidence" value="ECO:0000314"/>
    <property type="project" value="UniProtKB"/>
</dbReference>
<dbReference type="CDD" id="cd08226">
    <property type="entry name" value="PK_STRAD_beta"/>
    <property type="match status" value="1"/>
</dbReference>
<dbReference type="FunFam" id="1.10.510.10:FF:000419">
    <property type="entry name" value="STE20-related kinase adapter protein beta"/>
    <property type="match status" value="1"/>
</dbReference>
<dbReference type="FunFam" id="3.30.200.20:FF:000291">
    <property type="entry name" value="STE20-related kinase adapter protein beta isoform X1"/>
    <property type="match status" value="1"/>
</dbReference>
<dbReference type="Gene3D" id="3.30.200.20">
    <property type="entry name" value="Phosphorylase Kinase, domain 1"/>
    <property type="match status" value="1"/>
</dbReference>
<dbReference type="Gene3D" id="1.10.510.10">
    <property type="entry name" value="Transferase(Phosphotransferase) domain 1"/>
    <property type="match status" value="1"/>
</dbReference>
<dbReference type="InterPro" id="IPR011009">
    <property type="entry name" value="Kinase-like_dom_sf"/>
</dbReference>
<dbReference type="InterPro" id="IPR000719">
    <property type="entry name" value="Prot_kinase_dom"/>
</dbReference>
<dbReference type="InterPro" id="IPR047173">
    <property type="entry name" value="STRAD_A/B-like"/>
</dbReference>
<dbReference type="PANTHER" id="PTHR48014">
    <property type="entry name" value="SERINE/THREONINE-PROTEIN KINASE FRAY2"/>
    <property type="match status" value="1"/>
</dbReference>
<dbReference type="PANTHER" id="PTHR48014:SF13">
    <property type="entry name" value="STE20-RELATED KINASE ADAPTER PROTEIN BETA"/>
    <property type="match status" value="1"/>
</dbReference>
<dbReference type="Pfam" id="PF00069">
    <property type="entry name" value="Pkinase"/>
    <property type="match status" value="1"/>
</dbReference>
<dbReference type="SUPFAM" id="SSF56112">
    <property type="entry name" value="Protein kinase-like (PK-like)"/>
    <property type="match status" value="1"/>
</dbReference>
<dbReference type="PROSITE" id="PS50011">
    <property type="entry name" value="PROTEIN_KINASE_DOM"/>
    <property type="match status" value="1"/>
</dbReference>
<proteinExistence type="evidence at protein level"/>
<protein>
    <recommendedName>
        <fullName>STE20-related kinase adapter protein beta</fullName>
        <shortName>STRAD beta</shortName>
    </recommendedName>
    <alternativeName>
        <fullName>Amyotrophic lateral sclerosis 2 chromosomal region candidate gene 2 protein</fullName>
    </alternativeName>
    <alternativeName>
        <fullName>CALS-21</fullName>
    </alternativeName>
    <alternativeName>
        <fullName>ILP-interacting protein</fullName>
    </alternativeName>
    <alternativeName>
        <fullName>Pseudokinase ALS2CR2</fullName>
    </alternativeName>
</protein>
<gene>
    <name type="primary">STRADB</name>
    <name type="synonym">ALS2CR2</name>
    <name type="synonym">ILPIP</name>
    <name type="ORF">PRO1038</name>
</gene>
<feature type="chain" id="PRO_0000085617" description="STE20-related kinase adapter protein beta">
    <location>
        <begin position="1"/>
        <end position="418"/>
    </location>
</feature>
<feature type="domain" description="Protein kinase" evidence="2">
    <location>
        <begin position="58"/>
        <end position="369"/>
    </location>
</feature>
<feature type="binding site" evidence="2">
    <location>
        <begin position="64"/>
        <end position="72"/>
    </location>
    <ligand>
        <name>ATP</name>
        <dbReference type="ChEBI" id="CHEBI:30616"/>
    </ligand>
</feature>
<feature type="binding site" evidence="2">
    <location>
        <position position="89"/>
    </location>
    <ligand>
        <name>ATP</name>
        <dbReference type="ChEBI" id="CHEBI:30616"/>
    </ligand>
</feature>
<feature type="splice variant" id="VSP_016625" description="In isoform 3." evidence="7 9">
    <location>
        <begin position="1"/>
        <end position="138"/>
    </location>
</feature>
<feature type="splice variant" id="VSP_016623" description="In isoform 2." evidence="8">
    <original>MKEESQ</original>
    <variation>PYFEFL</variation>
    <location>
        <begin position="372"/>
        <end position="377"/>
    </location>
</feature>
<feature type="splice variant" id="VSP_016624" description="In isoform 2." evidence="8">
    <location>
        <begin position="378"/>
        <end position="418"/>
    </location>
</feature>
<feature type="sequence variant" id="VAR_041335" description="In a metastatic melanoma sample; somatic mutation." evidence="6">
    <original>G</original>
    <variation>E</variation>
    <location>
        <position position="155"/>
    </location>
</feature>
<feature type="sequence variant" id="VAR_041336" description="In dbSNP:rs35636836." evidence="6">
    <original>P</original>
    <variation>L</variation>
    <location>
        <position position="386"/>
    </location>
</feature>
<comment type="function">
    <text evidence="1 5">Pseudokinase which, in complex with CAB39/MO25 (CAB39/MO25alpha or CAB39L/MO25beta), binds to and activates STK11/LKB1. Adopts a closed conformation typical of active protein kinases and binds STK11/LKB1 as a pseudosubstrate, promoting conformational change of STK11/LKB1 in an active conformation (By similarity).</text>
</comment>
<comment type="subunit">
    <text evidence="4 5">Component of a trimeric complex composed of STK11/LKB1, STRAD (STRADA or STRADB) and CAB39/MO25 (CAB39/MO25alpha or CAB39L/MO25beta): the complex tethers STK11/LKB1 in the cytoplasm and stimulates its catalytic activity. Interacts with BIRC4/XIAP. These two proteins are likely to coexist in a complex with TAK1, TRAF6, TAB1 and TAB2.</text>
</comment>
<comment type="interaction">
    <interactant intactId="EBI-306893">
        <id>Q9C0K7</id>
    </interactant>
    <interactant intactId="EBI-306905">
        <id>Q9Y376</id>
        <label>CAB39</label>
    </interactant>
    <organismsDiffer>false</organismsDiffer>
    <experiments>8</experiments>
</comment>
<comment type="interaction">
    <interactant intactId="EBI-306893">
        <id>Q9C0K7</id>
    </interactant>
    <interactant intactId="EBI-306838">
        <id>Q15831</id>
        <label>STK11</label>
    </interactant>
    <organismsDiffer>false</organismsDiffer>
    <experiments>13</experiments>
</comment>
<comment type="subcellular location">
    <subcellularLocation>
        <location evidence="5">Nucleus</location>
    </subcellularLocation>
    <subcellularLocation>
        <location evidence="5">Cytoplasm</location>
    </subcellularLocation>
</comment>
<comment type="alternative products">
    <event type="alternative splicing"/>
    <isoform>
        <id>Q9C0K7-1</id>
        <name>1</name>
        <name>ILPIP-alpha</name>
        <sequence type="displayed"/>
    </isoform>
    <isoform>
        <id>Q9C0K7-2</id>
        <name>2</name>
        <sequence type="described" ref="VSP_016623 VSP_016624"/>
    </isoform>
    <isoform>
        <id>Q9C0K7-3</id>
        <name>3</name>
        <name>ILPIP-beta</name>
        <sequence type="described" ref="VSP_016625"/>
    </isoform>
</comment>
<comment type="tissue specificity">
    <text evidence="3 4">Highly expressed in heart, skeletal muscle, testis, liver and colon.</text>
</comment>
<comment type="domain">
    <text>The protein kinase domain is predicted to be catalytically inactive.</text>
</comment>
<comment type="similarity">
    <text evidence="10">Belongs to the protein kinase superfamily. STE Ser/Thr protein kinase family. STE20 subfamily.</text>
</comment>
<comment type="caution">
    <text evidence="10">Ser-184 is present instead of the conserved Asp which is expected to be an active site residue.</text>
</comment>
<evidence type="ECO:0000250" key="1"/>
<evidence type="ECO:0000255" key="2">
    <source>
        <dbReference type="PROSITE-ProRule" id="PRU00159"/>
    </source>
</evidence>
<evidence type="ECO:0000269" key="3">
    <source>
    </source>
</evidence>
<evidence type="ECO:0000269" key="4">
    <source>
    </source>
</evidence>
<evidence type="ECO:0000269" key="5">
    <source>
    </source>
</evidence>
<evidence type="ECO:0000269" key="6">
    <source>
    </source>
</evidence>
<evidence type="ECO:0000303" key="7">
    <source>
    </source>
</evidence>
<evidence type="ECO:0000303" key="8">
    <source>
    </source>
</evidence>
<evidence type="ECO:0000303" key="9">
    <source ref="3"/>
</evidence>
<evidence type="ECO:0000305" key="10"/>
<name>STRAB_HUMAN</name>
<keyword id="KW-0025">Alternative splicing</keyword>
<keyword id="KW-0067">ATP-binding</keyword>
<keyword id="KW-0131">Cell cycle</keyword>
<keyword id="KW-0963">Cytoplasm</keyword>
<keyword id="KW-0547">Nucleotide-binding</keyword>
<keyword id="KW-0539">Nucleus</keyword>
<keyword id="KW-1267">Proteomics identification</keyword>
<keyword id="KW-1185">Reference proteome</keyword>
<accession>Q9C0K7</accession>
<accession>Q5BKY7</accession>
<accession>Q9P1L0</accession>